<keyword id="KW-0378">Hydrolase</keyword>
<keyword id="KW-0460">Magnesium</keyword>
<keyword id="KW-0464">Manganese</keyword>
<keyword id="KW-0479">Metal-binding</keyword>
<keyword id="KW-0520">NAD</keyword>
<keyword id="KW-1185">Reference proteome</keyword>
<comment type="function">
    <text evidence="1">mRNA decapping enzyme that specifically removes the nicotinamide adenine dinucleotide (NAD) cap from a subset of mRNAs by hydrolyzing the diphosphate linkage to produce nicotinamide mononucleotide (NMN) and 5' monophosphate mRNA. The NAD-cap is present at the 5'-end of some mRNAs and stabilizes RNA against 5'-processing. Has preference for mRNAs with a 5'-end purine. Catalyzes the hydrolysis of a broad range of dinucleotide pyrophosphates.</text>
</comment>
<comment type="catalytic activity">
    <reaction evidence="1">
        <text>a 5'-end NAD(+)-phospho-ribonucleoside in mRNA + H2O = a 5'-end phospho-adenosine-phospho-ribonucleoside in mRNA + beta-nicotinamide D-ribonucleotide + 2 H(+)</text>
        <dbReference type="Rhea" id="RHEA:60876"/>
        <dbReference type="Rhea" id="RHEA-COMP:15698"/>
        <dbReference type="Rhea" id="RHEA-COMP:15719"/>
        <dbReference type="ChEBI" id="CHEBI:14649"/>
        <dbReference type="ChEBI" id="CHEBI:15377"/>
        <dbReference type="ChEBI" id="CHEBI:15378"/>
        <dbReference type="ChEBI" id="CHEBI:144029"/>
        <dbReference type="ChEBI" id="CHEBI:144051"/>
    </reaction>
    <physiologicalReaction direction="left-to-right" evidence="1">
        <dbReference type="Rhea" id="RHEA:60877"/>
    </physiologicalReaction>
</comment>
<comment type="catalytic activity">
    <reaction evidence="1">
        <text>NAD(+) + H2O = beta-nicotinamide D-ribonucleotide + AMP + 2 H(+)</text>
        <dbReference type="Rhea" id="RHEA:11800"/>
        <dbReference type="ChEBI" id="CHEBI:14649"/>
        <dbReference type="ChEBI" id="CHEBI:15377"/>
        <dbReference type="ChEBI" id="CHEBI:15378"/>
        <dbReference type="ChEBI" id="CHEBI:57540"/>
        <dbReference type="ChEBI" id="CHEBI:456215"/>
        <dbReference type="EC" id="3.6.1.22"/>
    </reaction>
</comment>
<comment type="catalytic activity">
    <reaction evidence="1">
        <text>NADH + H2O = reduced beta-nicotinamide D-ribonucleotide + AMP + 2 H(+)</text>
        <dbReference type="Rhea" id="RHEA:48868"/>
        <dbReference type="ChEBI" id="CHEBI:15377"/>
        <dbReference type="ChEBI" id="CHEBI:15378"/>
        <dbReference type="ChEBI" id="CHEBI:57945"/>
        <dbReference type="ChEBI" id="CHEBI:90832"/>
        <dbReference type="ChEBI" id="CHEBI:456215"/>
        <dbReference type="EC" id="3.6.1.22"/>
    </reaction>
</comment>
<comment type="cofactor">
    <cofactor evidence="1">
        <name>Mg(2+)</name>
        <dbReference type="ChEBI" id="CHEBI:18420"/>
    </cofactor>
    <cofactor evidence="1">
        <name>Mn(2+)</name>
        <dbReference type="ChEBI" id="CHEBI:29035"/>
    </cofactor>
    <text evidence="1">Divalent metal cations. Mg(2+) or Mn(2+).</text>
</comment>
<comment type="subunit">
    <text evidence="1">Homodimer.</text>
</comment>
<comment type="similarity">
    <text evidence="1 2">Belongs to the Nudix hydrolase family. NudC subfamily.</text>
</comment>
<sequence length="313" mass="33826">MTNVSGVDFQLRSVPLLSRVGADRADRLRTDMEAAAAGWPGAALLRVDSRNRVLVANGRVLLGAAIELADKPPPEAVFLGRVEGGRHVWAVRAALQPIADPDIPAEAVDLRGLGRIMDDTSSQLVSSASALLNWHDNARFSALDGAPTKPARAGWSRVNPITGHEEFPRIDPAVICLVHDGADRAVLARQAAWPERMFSLLAGFVEAGESFEVCVAREIREEIGLTVRDVRYLGSQQWPFPRSLMVGFHALGDPDEEFSFSDGEIAEAAWFTRDEVRAALAAGDWSSASESKLLLPGSISIARVIIESWAACE</sequence>
<proteinExistence type="inferred from homology"/>
<gene>
    <name evidence="1" type="primary">nudC</name>
    <name type="ordered locus">Rv3199c</name>
    <name type="ORF">MTV014.43c</name>
</gene>
<dbReference type="EC" id="3.6.1.-" evidence="1"/>
<dbReference type="EC" id="3.6.1.22" evidence="1"/>
<dbReference type="EMBL" id="AL123456">
    <property type="protein sequence ID" value="CCP46014.1"/>
    <property type="molecule type" value="Genomic_DNA"/>
</dbReference>
<dbReference type="PIR" id="E70951">
    <property type="entry name" value="E70951"/>
</dbReference>
<dbReference type="RefSeq" id="NP_217715.1">
    <property type="nucleotide sequence ID" value="NC_000962.3"/>
</dbReference>
<dbReference type="RefSeq" id="WP_003899965.1">
    <property type="nucleotide sequence ID" value="NZ_NVQJ01000003.1"/>
</dbReference>
<dbReference type="SMR" id="P9WIX5"/>
<dbReference type="FunCoup" id="P9WIX5">
    <property type="interactions" value="83"/>
</dbReference>
<dbReference type="STRING" id="83332.Rv3199c"/>
<dbReference type="PaxDb" id="83332-Rv3199c"/>
<dbReference type="DNASU" id="887860"/>
<dbReference type="GeneID" id="887860"/>
<dbReference type="KEGG" id="mtu:Rv3199c"/>
<dbReference type="KEGG" id="mtv:RVBD_3199c"/>
<dbReference type="TubercuList" id="Rv3199c"/>
<dbReference type="eggNOG" id="COG2816">
    <property type="taxonomic scope" value="Bacteria"/>
</dbReference>
<dbReference type="InParanoid" id="P9WIX5"/>
<dbReference type="OrthoDB" id="9791656at2"/>
<dbReference type="PhylomeDB" id="P9WIX5"/>
<dbReference type="BRENDA" id="3.6.1.22">
    <property type="organism ID" value="3445"/>
</dbReference>
<dbReference type="Proteomes" id="UP000001584">
    <property type="component" value="Chromosome"/>
</dbReference>
<dbReference type="GO" id="GO:0005886">
    <property type="term" value="C:plasma membrane"/>
    <property type="evidence" value="ECO:0007005"/>
    <property type="project" value="MTBBASE"/>
</dbReference>
<dbReference type="GO" id="GO:0000287">
    <property type="term" value="F:magnesium ion binding"/>
    <property type="evidence" value="ECO:0007669"/>
    <property type="project" value="UniProtKB-UniRule"/>
</dbReference>
<dbReference type="GO" id="GO:0030145">
    <property type="term" value="F:manganese ion binding"/>
    <property type="evidence" value="ECO:0007669"/>
    <property type="project" value="UniProtKB-UniRule"/>
</dbReference>
<dbReference type="GO" id="GO:0000210">
    <property type="term" value="F:NAD+ diphosphatase activity"/>
    <property type="evidence" value="ECO:0007669"/>
    <property type="project" value="UniProtKB-UniRule"/>
</dbReference>
<dbReference type="GO" id="GO:0035529">
    <property type="term" value="F:NADH pyrophosphatase activity"/>
    <property type="evidence" value="ECO:0000318"/>
    <property type="project" value="GO_Central"/>
</dbReference>
<dbReference type="GO" id="GO:0110153">
    <property type="term" value="F:RNA NAD-cap (NMN-forming) hydrolase activity"/>
    <property type="evidence" value="ECO:0007669"/>
    <property type="project" value="RHEA"/>
</dbReference>
<dbReference type="GO" id="GO:0019677">
    <property type="term" value="P:NAD catabolic process"/>
    <property type="evidence" value="ECO:0000318"/>
    <property type="project" value="GO_Central"/>
</dbReference>
<dbReference type="GO" id="GO:0006734">
    <property type="term" value="P:NADH metabolic process"/>
    <property type="evidence" value="ECO:0000318"/>
    <property type="project" value="GO_Central"/>
</dbReference>
<dbReference type="GO" id="GO:0006742">
    <property type="term" value="P:NADP catabolic process"/>
    <property type="evidence" value="ECO:0000318"/>
    <property type="project" value="GO_Central"/>
</dbReference>
<dbReference type="CDD" id="cd03429">
    <property type="entry name" value="NUDIX_NADH_pyrophosphatase_Nudt13"/>
    <property type="match status" value="1"/>
</dbReference>
<dbReference type="FunFam" id="3.90.79.10:FF:000048">
    <property type="entry name" value="NADH pyrophosphatase"/>
    <property type="match status" value="1"/>
</dbReference>
<dbReference type="Gene3D" id="3.90.79.20">
    <property type="match status" value="1"/>
</dbReference>
<dbReference type="Gene3D" id="3.90.79.10">
    <property type="entry name" value="Nucleoside Triphosphate Pyrophosphohydrolase"/>
    <property type="match status" value="1"/>
</dbReference>
<dbReference type="HAMAP" id="MF_00297">
    <property type="entry name" value="Nudix_NudC"/>
    <property type="match status" value="1"/>
</dbReference>
<dbReference type="InterPro" id="IPR050241">
    <property type="entry name" value="NAD-cap_RNA_hydrolase_NudC"/>
</dbReference>
<dbReference type="InterPro" id="IPR015375">
    <property type="entry name" value="NADH_PPase-like_N"/>
</dbReference>
<dbReference type="InterPro" id="IPR049734">
    <property type="entry name" value="NudC-like_C"/>
</dbReference>
<dbReference type="InterPro" id="IPR015797">
    <property type="entry name" value="NUDIX_hydrolase-like_dom_sf"/>
</dbReference>
<dbReference type="InterPro" id="IPR020084">
    <property type="entry name" value="NUDIX_hydrolase_CS"/>
</dbReference>
<dbReference type="InterPro" id="IPR000086">
    <property type="entry name" value="NUDIX_hydrolase_dom"/>
</dbReference>
<dbReference type="InterPro" id="IPR022925">
    <property type="entry name" value="RNA_Hydrolase_NudC"/>
</dbReference>
<dbReference type="InterPro" id="IPR015376">
    <property type="entry name" value="Znr_NADH_PPase"/>
</dbReference>
<dbReference type="NCBIfam" id="NF001299">
    <property type="entry name" value="PRK00241.1"/>
    <property type="match status" value="1"/>
</dbReference>
<dbReference type="PANTHER" id="PTHR42904:SF6">
    <property type="entry name" value="NAD-CAPPED RNA HYDROLASE NUDT12"/>
    <property type="match status" value="1"/>
</dbReference>
<dbReference type="PANTHER" id="PTHR42904">
    <property type="entry name" value="NUDIX HYDROLASE, NUDC SUBFAMILY"/>
    <property type="match status" value="1"/>
</dbReference>
<dbReference type="Pfam" id="PF00293">
    <property type="entry name" value="NUDIX"/>
    <property type="match status" value="1"/>
</dbReference>
<dbReference type="Pfam" id="PF09296">
    <property type="entry name" value="NUDIX-like"/>
    <property type="match status" value="1"/>
</dbReference>
<dbReference type="Pfam" id="PF09297">
    <property type="entry name" value="Zn_ribbon_NUD"/>
    <property type="match status" value="1"/>
</dbReference>
<dbReference type="SUPFAM" id="SSF55811">
    <property type="entry name" value="Nudix"/>
    <property type="match status" value="1"/>
</dbReference>
<dbReference type="PROSITE" id="PS51462">
    <property type="entry name" value="NUDIX"/>
    <property type="match status" value="1"/>
</dbReference>
<dbReference type="PROSITE" id="PS00893">
    <property type="entry name" value="NUDIX_BOX"/>
    <property type="match status" value="1"/>
</dbReference>
<protein>
    <recommendedName>
        <fullName evidence="1">NAD-capped RNA hydrolase NudC</fullName>
        <shortName evidence="1">DeNADding enzyme NudC</shortName>
        <ecNumber evidence="1">3.6.1.-</ecNumber>
    </recommendedName>
    <alternativeName>
        <fullName evidence="1">NADH pyrophosphatase</fullName>
        <ecNumber evidence="1">3.6.1.22</ecNumber>
    </alternativeName>
</protein>
<evidence type="ECO:0000255" key="1">
    <source>
        <dbReference type="HAMAP-Rule" id="MF_00297"/>
    </source>
</evidence>
<evidence type="ECO:0000305" key="2"/>
<organism>
    <name type="scientific">Mycobacterium tuberculosis (strain ATCC 25618 / H37Rv)</name>
    <dbReference type="NCBI Taxonomy" id="83332"/>
    <lineage>
        <taxon>Bacteria</taxon>
        <taxon>Bacillati</taxon>
        <taxon>Actinomycetota</taxon>
        <taxon>Actinomycetes</taxon>
        <taxon>Mycobacteriales</taxon>
        <taxon>Mycobacteriaceae</taxon>
        <taxon>Mycobacterium</taxon>
        <taxon>Mycobacterium tuberculosis complex</taxon>
    </lineage>
</organism>
<reference key="1">
    <citation type="journal article" date="1998" name="Nature">
        <title>Deciphering the biology of Mycobacterium tuberculosis from the complete genome sequence.</title>
        <authorList>
            <person name="Cole S.T."/>
            <person name="Brosch R."/>
            <person name="Parkhill J."/>
            <person name="Garnier T."/>
            <person name="Churcher C.M."/>
            <person name="Harris D.E."/>
            <person name="Gordon S.V."/>
            <person name="Eiglmeier K."/>
            <person name="Gas S."/>
            <person name="Barry C.E. III"/>
            <person name="Tekaia F."/>
            <person name="Badcock K."/>
            <person name="Basham D."/>
            <person name="Brown D."/>
            <person name="Chillingworth T."/>
            <person name="Connor R."/>
            <person name="Davies R.M."/>
            <person name="Devlin K."/>
            <person name="Feltwell T."/>
            <person name="Gentles S."/>
            <person name="Hamlin N."/>
            <person name="Holroyd S."/>
            <person name="Hornsby T."/>
            <person name="Jagels K."/>
            <person name="Krogh A."/>
            <person name="McLean J."/>
            <person name="Moule S."/>
            <person name="Murphy L.D."/>
            <person name="Oliver S."/>
            <person name="Osborne J."/>
            <person name="Quail M.A."/>
            <person name="Rajandream M.A."/>
            <person name="Rogers J."/>
            <person name="Rutter S."/>
            <person name="Seeger K."/>
            <person name="Skelton S."/>
            <person name="Squares S."/>
            <person name="Squares R."/>
            <person name="Sulston J.E."/>
            <person name="Taylor K."/>
            <person name="Whitehead S."/>
            <person name="Barrell B.G."/>
        </authorList>
    </citation>
    <scope>NUCLEOTIDE SEQUENCE [LARGE SCALE GENOMIC DNA]</scope>
    <source>
        <strain>ATCC 25618 / H37Rv</strain>
    </source>
</reference>
<accession>P9WIX5</accession>
<accession>L0TEX0</accession>
<accession>O53345</accession>
<feature type="chain" id="PRO_0000056970" description="NAD-capped RNA hydrolase NudC">
    <location>
        <begin position="1"/>
        <end position="313"/>
    </location>
</feature>
<feature type="domain" description="Nudix hydrolase" evidence="1">
    <location>
        <begin position="168"/>
        <end position="293"/>
    </location>
</feature>
<feature type="short sequence motif" description="Nudix box" evidence="1">
    <location>
        <begin position="203"/>
        <end position="224"/>
    </location>
</feature>
<feature type="binding site" evidence="1">
    <location>
        <position position="111"/>
    </location>
    <ligand>
        <name>substrate</name>
    </ligand>
</feature>
<feature type="binding site" evidence="1">
    <location>
        <position position="202"/>
    </location>
    <ligand>
        <name>a divalent metal cation</name>
        <dbReference type="ChEBI" id="CHEBI:60240"/>
        <label>1</label>
    </ligand>
</feature>
<feature type="binding site" evidence="1">
    <location>
        <position position="218"/>
    </location>
    <ligand>
        <name>a divalent metal cation</name>
        <dbReference type="ChEBI" id="CHEBI:60240"/>
        <label>2</label>
    </ligand>
</feature>
<feature type="binding site" evidence="1">
    <location>
        <position position="218"/>
    </location>
    <ligand>
        <name>a divalent metal cation</name>
        <dbReference type="ChEBI" id="CHEBI:60240"/>
        <label>3</label>
    </ligand>
</feature>
<feature type="binding site" evidence="1">
    <location>
        <position position="222"/>
    </location>
    <ligand>
        <name>a divalent metal cation</name>
        <dbReference type="ChEBI" id="CHEBI:60240"/>
        <label>1</label>
    </ligand>
</feature>
<feature type="binding site" evidence="1">
    <location>
        <position position="222"/>
    </location>
    <ligand>
        <name>a divalent metal cation</name>
        <dbReference type="ChEBI" id="CHEBI:60240"/>
        <label>3</label>
    </ligand>
</feature>
<feature type="binding site" evidence="1">
    <location>
        <begin position="236"/>
        <end position="243"/>
    </location>
    <ligand>
        <name>substrate</name>
    </ligand>
</feature>
<feature type="binding site" evidence="1">
    <location>
        <position position="264"/>
    </location>
    <ligand>
        <name>a divalent metal cation</name>
        <dbReference type="ChEBI" id="CHEBI:60240"/>
        <label>1</label>
    </ligand>
</feature>
<feature type="binding site" evidence="1">
    <location>
        <position position="264"/>
    </location>
    <ligand>
        <name>a divalent metal cation</name>
        <dbReference type="ChEBI" id="CHEBI:60240"/>
        <label>3</label>
    </ligand>
</feature>
<name>NUDC_MYCTU</name>